<reference key="1">
    <citation type="journal article" date="1990" name="Virus Res.">
        <title>A comparative sequence analysis of two human papillomavirus (HPV) types 2a and 57.</title>
        <authorList>
            <person name="Hirsch-Behnam A."/>
            <person name="Delius H."/>
            <person name="de Villiers E.M."/>
        </authorList>
    </citation>
    <scope>NUCLEOTIDE SEQUENCE [GENOMIC DNA]</scope>
</reference>
<feature type="chain" id="PRO_0000133320" description="Protein E6">
    <location>
        <begin position="1"/>
        <end position="153"/>
    </location>
</feature>
<feature type="zinc finger region" evidence="1">
    <location>
        <begin position="29"/>
        <end position="65"/>
    </location>
</feature>
<feature type="zinc finger region" evidence="1">
    <location>
        <begin position="102"/>
        <end position="138"/>
    </location>
</feature>
<protein>
    <recommendedName>
        <fullName evidence="1">Protein E6</fullName>
    </recommendedName>
</protein>
<organism>
    <name type="scientific">Human papillomavirus type 2a</name>
    <dbReference type="NCBI Taxonomy" id="10584"/>
    <lineage>
        <taxon>Viruses</taxon>
        <taxon>Monodnaviria</taxon>
        <taxon>Shotokuvirae</taxon>
        <taxon>Cossaviricota</taxon>
        <taxon>Papovaviricetes</taxon>
        <taxon>Zurhausenvirales</taxon>
        <taxon>Papillomaviridae</taxon>
        <taxon>Firstpapillomavirinae</taxon>
        <taxon>Alphapapillomavirus</taxon>
        <taxon>Alphapapillomavirus 4</taxon>
    </lineage>
</organism>
<comment type="function">
    <text evidence="1">Plays a major role in the induction and maintenance of cellular transformation. E6 associates with host UBE3A/E6-AP ubiquitin-protein ligase and modulates its activity. Sequesters tumor suppressor TP53 in the host cytoplasm and modulates its activity by interacting with host EP300 that results in the reduction of TP53 acetylation and activation. In turn, apoptosis induced by DNA damage is inhibited. E6 also protects host keratinocytes from apoptosis by mediating the degradation of host BAK1. May also inhibit host immune response.</text>
</comment>
<comment type="subunit">
    <text evidence="1">Forms homodimers. Interacts with ubiquitin-protein ligase UBE3A/E6-AP; this interaction stimulates UBE3A ubiquitin activity. Interacts with host TP53 and EP300; this interaction inhibits TP53 activity.</text>
</comment>
<comment type="subcellular location">
    <subcellularLocation>
        <location evidence="1">Host cytoplasm</location>
    </subcellularLocation>
    <subcellularLocation>
        <location evidence="1">Host nucleus</location>
    </subcellularLocation>
</comment>
<comment type="miscellaneous">
    <text evidence="1">Belongs to the low risk human alphapapillomavirus family. The cancer-causing human papillomavirus E6 protein has a unique carboxy terminal PDZ domain containing substrate but low risk E6s do not possess this domain.</text>
</comment>
<comment type="similarity">
    <text evidence="2">Belongs to the papillomaviridae E6 protein family.</text>
</comment>
<dbReference type="EMBL" id="X55964">
    <property type="status" value="NOT_ANNOTATED_CDS"/>
    <property type="molecule type" value="Genomic_DNA"/>
</dbReference>
<dbReference type="PIR" id="S15614">
    <property type="entry name" value="S15614"/>
</dbReference>
<dbReference type="SMR" id="P25484"/>
<dbReference type="Proteomes" id="UP000007710">
    <property type="component" value="Segment"/>
</dbReference>
<dbReference type="GO" id="GO:0030430">
    <property type="term" value="C:host cell cytoplasm"/>
    <property type="evidence" value="ECO:0007669"/>
    <property type="project" value="UniProtKB-SubCell"/>
</dbReference>
<dbReference type="GO" id="GO:0042025">
    <property type="term" value="C:host cell nucleus"/>
    <property type="evidence" value="ECO:0007669"/>
    <property type="project" value="UniProtKB-SubCell"/>
</dbReference>
<dbReference type="GO" id="GO:0003677">
    <property type="term" value="F:DNA binding"/>
    <property type="evidence" value="ECO:0007669"/>
    <property type="project" value="UniProtKB-UniRule"/>
</dbReference>
<dbReference type="GO" id="GO:0008270">
    <property type="term" value="F:zinc ion binding"/>
    <property type="evidence" value="ECO:0007669"/>
    <property type="project" value="UniProtKB-KW"/>
</dbReference>
<dbReference type="GO" id="GO:0006351">
    <property type="term" value="P:DNA-templated transcription"/>
    <property type="evidence" value="ECO:0007669"/>
    <property type="project" value="UniProtKB-UniRule"/>
</dbReference>
<dbReference type="GO" id="GO:0006355">
    <property type="term" value="P:regulation of DNA-templated transcription"/>
    <property type="evidence" value="ECO:0007669"/>
    <property type="project" value="UniProtKB-UniRule"/>
</dbReference>
<dbReference type="GO" id="GO:0052150">
    <property type="term" value="P:symbiont-mediated perturbation of host apoptosis"/>
    <property type="evidence" value="ECO:0007669"/>
    <property type="project" value="UniProtKB-KW"/>
</dbReference>
<dbReference type="GO" id="GO:0039648">
    <property type="term" value="P:symbiont-mediated perturbation of host ubiquitin-like protein modification"/>
    <property type="evidence" value="ECO:0007669"/>
    <property type="project" value="UniProtKB-UniRule"/>
</dbReference>
<dbReference type="GO" id="GO:0052170">
    <property type="term" value="P:symbiont-mediated suppression of host innate immune response"/>
    <property type="evidence" value="ECO:0007669"/>
    <property type="project" value="UniProtKB-KW"/>
</dbReference>
<dbReference type="GO" id="GO:0039502">
    <property type="term" value="P:symbiont-mediated suppression of host type I interferon-mediated signaling pathway"/>
    <property type="evidence" value="ECO:0007669"/>
    <property type="project" value="UniProtKB-UniRule"/>
</dbReference>
<dbReference type="Gene3D" id="3.30.240.40">
    <property type="entry name" value="E6 early regulatory protein"/>
    <property type="match status" value="2"/>
</dbReference>
<dbReference type="HAMAP" id="MF_04006">
    <property type="entry name" value="HPV_E6"/>
    <property type="match status" value="1"/>
</dbReference>
<dbReference type="InterPro" id="IPR001334">
    <property type="entry name" value="E6"/>
</dbReference>
<dbReference type="InterPro" id="IPR038575">
    <property type="entry name" value="E6_sf"/>
</dbReference>
<dbReference type="Pfam" id="PF00518">
    <property type="entry name" value="E6"/>
    <property type="match status" value="1"/>
</dbReference>
<dbReference type="SUPFAM" id="SSF161229">
    <property type="entry name" value="E6 C-terminal domain-like"/>
    <property type="match status" value="2"/>
</dbReference>
<accession>P25484</accession>
<name>VE6_HPV2A</name>
<evidence type="ECO:0000255" key="1">
    <source>
        <dbReference type="HAMAP-Rule" id="MF_04006"/>
    </source>
</evidence>
<evidence type="ECO:0000305" key="2"/>
<gene>
    <name evidence="1" type="primary">E6</name>
</gene>
<organismHost>
    <name type="scientific">Homo sapiens</name>
    <name type="common">Human</name>
    <dbReference type="NCBI Taxonomy" id="9606"/>
</organismHost>
<sequence>MSEENPCPRNIFLLCKEYGLELEDLRLLCVWCKRPLSEADIWAFAIKELFVVWRKGFPFGACGKCLIAAGKLRQYRHWHYSCYGDTVETETGIPIPQLFMRCYICHKPLSWEEKEALLVGNKRFHNISGRWTGHCMNCGSSCTATDPASRTLH</sequence>
<keyword id="KW-0010">Activator</keyword>
<keyword id="KW-0238">DNA-binding</keyword>
<keyword id="KW-0244">Early protein</keyword>
<keyword id="KW-1035">Host cytoplasm</keyword>
<keyword id="KW-1048">Host nucleus</keyword>
<keyword id="KW-0945">Host-virus interaction</keyword>
<keyword id="KW-1090">Inhibition of host innate immune response by virus</keyword>
<keyword id="KW-0479">Metal-binding</keyword>
<keyword id="KW-1119">Modulation of host cell apoptosis by virus</keyword>
<keyword id="KW-0804">Transcription</keyword>
<keyword id="KW-0805">Transcription regulation</keyword>
<keyword id="KW-0899">Viral immunoevasion</keyword>
<keyword id="KW-0862">Zinc</keyword>
<keyword id="KW-0863">Zinc-finger</keyword>
<proteinExistence type="inferred from homology"/>